<comment type="function">
    <text evidence="1">Methylates ribosomal protein L11.</text>
</comment>
<comment type="catalytic activity">
    <reaction evidence="1">
        <text>L-lysyl-[protein] + 3 S-adenosyl-L-methionine = N(6),N(6),N(6)-trimethyl-L-lysyl-[protein] + 3 S-adenosyl-L-homocysteine + 3 H(+)</text>
        <dbReference type="Rhea" id="RHEA:54192"/>
        <dbReference type="Rhea" id="RHEA-COMP:9752"/>
        <dbReference type="Rhea" id="RHEA-COMP:13826"/>
        <dbReference type="ChEBI" id="CHEBI:15378"/>
        <dbReference type="ChEBI" id="CHEBI:29969"/>
        <dbReference type="ChEBI" id="CHEBI:57856"/>
        <dbReference type="ChEBI" id="CHEBI:59789"/>
        <dbReference type="ChEBI" id="CHEBI:61961"/>
    </reaction>
</comment>
<comment type="subcellular location">
    <subcellularLocation>
        <location evidence="1">Cytoplasm</location>
    </subcellularLocation>
</comment>
<comment type="similarity">
    <text evidence="1">Belongs to the methyltransferase superfamily. PrmA family.</text>
</comment>
<comment type="sequence caution" evidence="2">
    <conflict type="erroneous initiation">
        <sequence resource="EMBL-CDS" id="CAA07516"/>
    </conflict>
</comment>
<gene>
    <name evidence="1" type="primary">prmA</name>
</gene>
<keyword id="KW-0963">Cytoplasm</keyword>
<keyword id="KW-0489">Methyltransferase</keyword>
<keyword id="KW-0949">S-adenosyl-L-methionine</keyword>
<keyword id="KW-0808">Transferase</keyword>
<name>PRMA_THENE</name>
<feature type="chain" id="PRO_0000192327" description="Ribosomal protein L11 methyltransferase">
    <location>
        <begin position="1"/>
        <end position="264"/>
    </location>
</feature>
<feature type="binding site" evidence="1">
    <location>
        <position position="116"/>
    </location>
    <ligand>
        <name>S-adenosyl-L-methionine</name>
        <dbReference type="ChEBI" id="CHEBI:59789"/>
    </ligand>
</feature>
<feature type="binding site" evidence="1">
    <location>
        <position position="137"/>
    </location>
    <ligand>
        <name>S-adenosyl-L-methionine</name>
        <dbReference type="ChEBI" id="CHEBI:59789"/>
    </ligand>
</feature>
<feature type="binding site" evidence="1">
    <location>
        <position position="159"/>
    </location>
    <ligand>
        <name>S-adenosyl-L-methionine</name>
        <dbReference type="ChEBI" id="CHEBI:59789"/>
    </ligand>
</feature>
<feature type="binding site" evidence="1">
    <location>
        <position position="200"/>
    </location>
    <ligand>
        <name>S-adenosyl-L-methionine</name>
        <dbReference type="ChEBI" id="CHEBI:59789"/>
    </ligand>
</feature>
<accession>O86951</accession>
<dbReference type="EC" id="2.1.1.-" evidence="1"/>
<dbReference type="EMBL" id="AJ007446">
    <property type="protein sequence ID" value="CAA07516.1"/>
    <property type="status" value="ALT_INIT"/>
    <property type="molecule type" value="Genomic_DNA"/>
</dbReference>
<dbReference type="SMR" id="O86951"/>
<dbReference type="GO" id="GO:0005737">
    <property type="term" value="C:cytoplasm"/>
    <property type="evidence" value="ECO:0007669"/>
    <property type="project" value="UniProtKB-SubCell"/>
</dbReference>
<dbReference type="GO" id="GO:0016279">
    <property type="term" value="F:protein-lysine N-methyltransferase activity"/>
    <property type="evidence" value="ECO:0007669"/>
    <property type="project" value="RHEA"/>
</dbReference>
<dbReference type="GO" id="GO:0032259">
    <property type="term" value="P:methylation"/>
    <property type="evidence" value="ECO:0007669"/>
    <property type="project" value="UniProtKB-KW"/>
</dbReference>
<dbReference type="CDD" id="cd02440">
    <property type="entry name" value="AdoMet_MTases"/>
    <property type="match status" value="1"/>
</dbReference>
<dbReference type="Gene3D" id="3.40.50.150">
    <property type="entry name" value="Vaccinia Virus protein VP39"/>
    <property type="match status" value="1"/>
</dbReference>
<dbReference type="HAMAP" id="MF_00735">
    <property type="entry name" value="Methyltr_PrmA"/>
    <property type="match status" value="1"/>
</dbReference>
<dbReference type="InterPro" id="IPR050078">
    <property type="entry name" value="Ribosomal_L11_MeTrfase_PrmA"/>
</dbReference>
<dbReference type="InterPro" id="IPR004498">
    <property type="entry name" value="Ribosomal_PrmA_MeTrfase"/>
</dbReference>
<dbReference type="InterPro" id="IPR029063">
    <property type="entry name" value="SAM-dependent_MTases_sf"/>
</dbReference>
<dbReference type="PANTHER" id="PTHR43648">
    <property type="entry name" value="ELECTRON TRANSFER FLAVOPROTEIN BETA SUBUNIT LYSINE METHYLTRANSFERASE"/>
    <property type="match status" value="1"/>
</dbReference>
<dbReference type="PANTHER" id="PTHR43648:SF1">
    <property type="entry name" value="ELECTRON TRANSFER FLAVOPROTEIN BETA SUBUNIT LYSINE METHYLTRANSFERASE"/>
    <property type="match status" value="1"/>
</dbReference>
<dbReference type="Pfam" id="PF06325">
    <property type="entry name" value="PrmA"/>
    <property type="match status" value="1"/>
</dbReference>
<dbReference type="PIRSF" id="PIRSF000401">
    <property type="entry name" value="RPL11_MTase"/>
    <property type="match status" value="1"/>
</dbReference>
<dbReference type="SUPFAM" id="SSF53335">
    <property type="entry name" value="S-adenosyl-L-methionine-dependent methyltransferases"/>
    <property type="match status" value="1"/>
</dbReference>
<protein>
    <recommendedName>
        <fullName evidence="1">Ribosomal protein L11 methyltransferase</fullName>
        <shortName evidence="1">L11 Mtase</shortName>
        <ecNumber evidence="1">2.1.1.-</ecNumber>
    </recommendedName>
</protein>
<organism>
    <name type="scientific">Thermotoga neapolitana</name>
    <dbReference type="NCBI Taxonomy" id="2337"/>
    <lineage>
        <taxon>Bacteria</taxon>
        <taxon>Thermotogati</taxon>
        <taxon>Thermotogota</taxon>
        <taxon>Thermotogae</taxon>
        <taxon>Thermotogales</taxon>
        <taxon>Thermotogaceae</taxon>
        <taxon>Thermotoga</taxon>
    </lineage>
</organism>
<evidence type="ECO:0000255" key="1">
    <source>
        <dbReference type="HAMAP-Rule" id="MF_00735"/>
    </source>
</evidence>
<evidence type="ECO:0000305" key="2"/>
<reference key="1">
    <citation type="journal article" date="1999" name="Syst. Appl. Microbiol.">
        <title>Organization of the chromosomal region containing the genes lexA and topA in Thermotoga neapolitana. Primary structure of LexA reveals phylogenetic relevance.</title>
        <authorList>
            <person name="Zverlov V.V."/>
            <person name="Schwarz W.H."/>
        </authorList>
    </citation>
    <scope>NUCLEOTIDE SEQUENCE [GENOMIC DNA]</scope>
    <source>
        <strain>Z2706-MC24</strain>
    </source>
</reference>
<sequence>MRFKELVFLLKIDEEELLEKLYEEGFFNFAIEENKEGDRLLRVYLREGETLPSFLSNWKILDERLTTPKDWMVELEPFEIVEDVVVDPTEKVTRTDKIVVKLSPGVAFGTGLHPTTQMSVLFLKKYLKKGDRVVDVGCGTGILAIVAKKLGASYVLAVDVDEQAVEVAKENVQKNSVDVTVKRSDLLSEVEGVFDLVVSNILAEIHLRLLEDVSRVTHEKSILILSGIVDTKEDMVREKAQKKGWNLLERKQEREWVTLVMKRS</sequence>
<proteinExistence type="inferred from homology"/>